<evidence type="ECO:0000255" key="1">
    <source>
        <dbReference type="HAMAP-Rule" id="MF_01416"/>
    </source>
</evidence>
<organism>
    <name type="scientific">Actinobacillus pleuropneumoniae serotype 3 (strain JL03)</name>
    <dbReference type="NCBI Taxonomy" id="434271"/>
    <lineage>
        <taxon>Bacteria</taxon>
        <taxon>Pseudomonadati</taxon>
        <taxon>Pseudomonadota</taxon>
        <taxon>Gammaproteobacteria</taxon>
        <taxon>Pasteurellales</taxon>
        <taxon>Pasteurellaceae</taxon>
        <taxon>Actinobacillus</taxon>
    </lineage>
</organism>
<keyword id="KW-0066">ATP synthesis</keyword>
<keyword id="KW-0997">Cell inner membrane</keyword>
<keyword id="KW-1003">Cell membrane</keyword>
<keyword id="KW-0139">CF(1)</keyword>
<keyword id="KW-0375">Hydrogen ion transport</keyword>
<keyword id="KW-0406">Ion transport</keyword>
<keyword id="KW-0472">Membrane</keyword>
<keyword id="KW-0813">Transport</keyword>
<protein>
    <recommendedName>
        <fullName evidence="1">ATP synthase subunit delta</fullName>
    </recommendedName>
    <alternativeName>
        <fullName evidence="1">ATP synthase F(1) sector subunit delta</fullName>
    </alternativeName>
    <alternativeName>
        <fullName evidence="1">F-type ATPase subunit delta</fullName>
        <shortName evidence="1">F-ATPase subunit delta</shortName>
    </alternativeName>
</protein>
<dbReference type="EMBL" id="CP000687">
    <property type="protein sequence ID" value="ABY70234.1"/>
    <property type="molecule type" value="Genomic_DNA"/>
</dbReference>
<dbReference type="RefSeq" id="WP_005602403.1">
    <property type="nucleotide sequence ID" value="NC_010278.1"/>
</dbReference>
<dbReference type="SMR" id="B0BRX5"/>
<dbReference type="KEGG" id="apj:APJL_1682"/>
<dbReference type="HOGENOM" id="CLU_085114_3_0_6"/>
<dbReference type="Proteomes" id="UP000008547">
    <property type="component" value="Chromosome"/>
</dbReference>
<dbReference type="GO" id="GO:0005886">
    <property type="term" value="C:plasma membrane"/>
    <property type="evidence" value="ECO:0007669"/>
    <property type="project" value="UniProtKB-SubCell"/>
</dbReference>
<dbReference type="GO" id="GO:0045259">
    <property type="term" value="C:proton-transporting ATP synthase complex"/>
    <property type="evidence" value="ECO:0007669"/>
    <property type="project" value="UniProtKB-KW"/>
</dbReference>
<dbReference type="GO" id="GO:0046933">
    <property type="term" value="F:proton-transporting ATP synthase activity, rotational mechanism"/>
    <property type="evidence" value="ECO:0007669"/>
    <property type="project" value="UniProtKB-UniRule"/>
</dbReference>
<dbReference type="Gene3D" id="1.10.520.20">
    <property type="entry name" value="N-terminal domain of the delta subunit of the F1F0-ATP synthase"/>
    <property type="match status" value="1"/>
</dbReference>
<dbReference type="HAMAP" id="MF_01416">
    <property type="entry name" value="ATP_synth_delta_bact"/>
    <property type="match status" value="1"/>
</dbReference>
<dbReference type="InterPro" id="IPR026015">
    <property type="entry name" value="ATP_synth_OSCP/delta_N_sf"/>
</dbReference>
<dbReference type="InterPro" id="IPR000711">
    <property type="entry name" value="ATPase_OSCP/dsu"/>
</dbReference>
<dbReference type="NCBIfam" id="TIGR01145">
    <property type="entry name" value="ATP_synt_delta"/>
    <property type="match status" value="1"/>
</dbReference>
<dbReference type="NCBIfam" id="NF004402">
    <property type="entry name" value="PRK05758.2-2"/>
    <property type="match status" value="1"/>
</dbReference>
<dbReference type="NCBIfam" id="NF004404">
    <property type="entry name" value="PRK05758.2-5"/>
    <property type="match status" value="1"/>
</dbReference>
<dbReference type="PANTHER" id="PTHR11910">
    <property type="entry name" value="ATP SYNTHASE DELTA CHAIN"/>
    <property type="match status" value="1"/>
</dbReference>
<dbReference type="Pfam" id="PF00213">
    <property type="entry name" value="OSCP"/>
    <property type="match status" value="1"/>
</dbReference>
<dbReference type="PRINTS" id="PR00125">
    <property type="entry name" value="ATPASEDELTA"/>
</dbReference>
<dbReference type="SUPFAM" id="SSF47928">
    <property type="entry name" value="N-terminal domain of the delta subunit of the F1F0-ATP synthase"/>
    <property type="match status" value="1"/>
</dbReference>
<gene>
    <name evidence="1" type="primary">atpH</name>
    <name type="ordered locus">APJL_1682</name>
</gene>
<sequence length="177" mass="19714">MSELSTVARPYAKAAFDFALEQGQLDKWQEMLQFSAFVAENEQVAEYINSSLASGQISETFIKICGDQLDQYGQNFIRVMAENKRLAVLPMVFDTFVSLRAEHEAVKDVTIFSANELSQAQEDKIAKAMEKRLGQKVRLTNQIDNSLIAGVIIKYDDVVIDGSSRGQLNRLASALSL</sequence>
<feature type="chain" id="PRO_1000184637" description="ATP synthase subunit delta">
    <location>
        <begin position="1"/>
        <end position="177"/>
    </location>
</feature>
<comment type="function">
    <text evidence="1">F(1)F(0) ATP synthase produces ATP from ADP in the presence of a proton or sodium gradient. F-type ATPases consist of two structural domains, F(1) containing the extramembraneous catalytic core and F(0) containing the membrane proton channel, linked together by a central stalk and a peripheral stalk. During catalysis, ATP synthesis in the catalytic domain of F(1) is coupled via a rotary mechanism of the central stalk subunits to proton translocation.</text>
</comment>
<comment type="function">
    <text evidence="1">This protein is part of the stalk that links CF(0) to CF(1). It either transmits conformational changes from CF(0) to CF(1) or is implicated in proton conduction.</text>
</comment>
<comment type="subunit">
    <text evidence="1">F-type ATPases have 2 components, F(1) - the catalytic core - and F(0) - the membrane proton channel. F(1) has five subunits: alpha(3), beta(3), gamma(1), delta(1), epsilon(1). F(0) has three main subunits: a(1), b(2) and c(10-14). The alpha and beta chains form an alternating ring which encloses part of the gamma chain. F(1) is attached to F(0) by a central stalk formed by the gamma and epsilon chains, while a peripheral stalk is formed by the delta and b chains.</text>
</comment>
<comment type="subcellular location">
    <subcellularLocation>
        <location evidence="1">Cell inner membrane</location>
        <topology evidence="1">Peripheral membrane protein</topology>
    </subcellularLocation>
</comment>
<comment type="similarity">
    <text evidence="1">Belongs to the ATPase delta chain family.</text>
</comment>
<name>ATPD_ACTPJ</name>
<proteinExistence type="inferred from homology"/>
<reference key="1">
    <citation type="journal article" date="2008" name="PLoS ONE">
        <title>Genome biology of Actinobacillus pleuropneumoniae JL03, an isolate of serotype 3 prevalent in China.</title>
        <authorList>
            <person name="Xu Z."/>
            <person name="Zhou Y."/>
            <person name="Li L."/>
            <person name="Zhou R."/>
            <person name="Xiao S."/>
            <person name="Wan Y."/>
            <person name="Zhang S."/>
            <person name="Wang K."/>
            <person name="Li W."/>
            <person name="Li L."/>
            <person name="Jin H."/>
            <person name="Kang M."/>
            <person name="Dalai B."/>
            <person name="Li T."/>
            <person name="Liu L."/>
            <person name="Cheng Y."/>
            <person name="Zhang L."/>
            <person name="Xu T."/>
            <person name="Zheng H."/>
            <person name="Pu S."/>
            <person name="Wang B."/>
            <person name="Gu W."/>
            <person name="Zhang X.L."/>
            <person name="Zhu G.-F."/>
            <person name="Wang S."/>
            <person name="Zhao G.-P."/>
            <person name="Chen H."/>
        </authorList>
    </citation>
    <scope>NUCLEOTIDE SEQUENCE [LARGE SCALE GENOMIC DNA]</scope>
    <source>
        <strain>JL03</strain>
    </source>
</reference>
<accession>B0BRX5</accession>